<proteinExistence type="inferred from homology"/>
<dbReference type="EC" id="7.1.1.-" evidence="1"/>
<dbReference type="EMBL" id="AE006468">
    <property type="protein sequence ID" value="AAL21228.1"/>
    <property type="molecule type" value="Genomic_DNA"/>
</dbReference>
<dbReference type="RefSeq" id="NP_461269.1">
    <property type="nucleotide sequence ID" value="NC_003197.2"/>
</dbReference>
<dbReference type="RefSeq" id="WP_000386728.1">
    <property type="nucleotide sequence ID" value="NC_003197.2"/>
</dbReference>
<dbReference type="SMR" id="Q7CQ50"/>
<dbReference type="STRING" id="99287.STM2327"/>
<dbReference type="PaxDb" id="99287-STM2327"/>
<dbReference type="GeneID" id="1253849"/>
<dbReference type="KEGG" id="stm:STM2327"/>
<dbReference type="PATRIC" id="fig|99287.12.peg.2464"/>
<dbReference type="HOGENOM" id="CLU_055737_7_3_6"/>
<dbReference type="OMA" id="CGGPYWE"/>
<dbReference type="PhylomeDB" id="Q7CQ50"/>
<dbReference type="BioCyc" id="SENT99287:STM2327-MONOMER"/>
<dbReference type="Proteomes" id="UP000001014">
    <property type="component" value="Chromosome"/>
</dbReference>
<dbReference type="GO" id="GO:0005886">
    <property type="term" value="C:plasma membrane"/>
    <property type="evidence" value="ECO:0007669"/>
    <property type="project" value="UniProtKB-SubCell"/>
</dbReference>
<dbReference type="GO" id="GO:0045271">
    <property type="term" value="C:respiratory chain complex I"/>
    <property type="evidence" value="ECO:0000318"/>
    <property type="project" value="GO_Central"/>
</dbReference>
<dbReference type="GO" id="GO:0051539">
    <property type="term" value="F:4 iron, 4 sulfur cluster binding"/>
    <property type="evidence" value="ECO:0007669"/>
    <property type="project" value="UniProtKB-KW"/>
</dbReference>
<dbReference type="GO" id="GO:0005506">
    <property type="term" value="F:iron ion binding"/>
    <property type="evidence" value="ECO:0007669"/>
    <property type="project" value="UniProtKB-UniRule"/>
</dbReference>
<dbReference type="GO" id="GO:0008137">
    <property type="term" value="F:NADH dehydrogenase (ubiquinone) activity"/>
    <property type="evidence" value="ECO:0000318"/>
    <property type="project" value="GO_Central"/>
</dbReference>
<dbReference type="GO" id="GO:0050136">
    <property type="term" value="F:NADH:ubiquinone reductase (non-electrogenic) activity"/>
    <property type="evidence" value="ECO:0007669"/>
    <property type="project" value="UniProtKB-UniRule"/>
</dbReference>
<dbReference type="GO" id="GO:0048038">
    <property type="term" value="F:quinone binding"/>
    <property type="evidence" value="ECO:0007669"/>
    <property type="project" value="UniProtKB-KW"/>
</dbReference>
<dbReference type="GO" id="GO:0009060">
    <property type="term" value="P:aerobic respiration"/>
    <property type="evidence" value="ECO:0000318"/>
    <property type="project" value="GO_Central"/>
</dbReference>
<dbReference type="GO" id="GO:0015990">
    <property type="term" value="P:electron transport coupled proton transport"/>
    <property type="evidence" value="ECO:0000318"/>
    <property type="project" value="GO_Central"/>
</dbReference>
<dbReference type="FunFam" id="3.40.50.12280:FF:000002">
    <property type="entry name" value="NADH-quinone oxidoreductase subunit B"/>
    <property type="match status" value="1"/>
</dbReference>
<dbReference type="Gene3D" id="3.40.50.12280">
    <property type="match status" value="1"/>
</dbReference>
<dbReference type="HAMAP" id="MF_01356">
    <property type="entry name" value="NDH1_NuoB"/>
    <property type="match status" value="1"/>
</dbReference>
<dbReference type="InterPro" id="IPR006137">
    <property type="entry name" value="NADH_UbQ_OxRdtase-like_20kDa"/>
</dbReference>
<dbReference type="InterPro" id="IPR006138">
    <property type="entry name" value="NADH_UQ_OxRdtase_20Kd_su"/>
</dbReference>
<dbReference type="NCBIfam" id="TIGR01957">
    <property type="entry name" value="nuoB_fam"/>
    <property type="match status" value="1"/>
</dbReference>
<dbReference type="NCBIfam" id="NF005012">
    <property type="entry name" value="PRK06411.1"/>
    <property type="match status" value="1"/>
</dbReference>
<dbReference type="PANTHER" id="PTHR11995">
    <property type="entry name" value="NADH DEHYDROGENASE"/>
    <property type="match status" value="1"/>
</dbReference>
<dbReference type="PANTHER" id="PTHR11995:SF14">
    <property type="entry name" value="NADH DEHYDROGENASE [UBIQUINONE] IRON-SULFUR PROTEIN 7, MITOCHONDRIAL"/>
    <property type="match status" value="1"/>
</dbReference>
<dbReference type="Pfam" id="PF01058">
    <property type="entry name" value="Oxidored_q6"/>
    <property type="match status" value="1"/>
</dbReference>
<dbReference type="SUPFAM" id="SSF56770">
    <property type="entry name" value="HydA/Nqo6-like"/>
    <property type="match status" value="1"/>
</dbReference>
<dbReference type="PROSITE" id="PS01150">
    <property type="entry name" value="COMPLEX1_20K"/>
    <property type="match status" value="1"/>
</dbReference>
<accession>Q7CQ50</accession>
<reference key="1">
    <citation type="journal article" date="2001" name="Nature">
        <title>Complete genome sequence of Salmonella enterica serovar Typhimurium LT2.</title>
        <authorList>
            <person name="McClelland M."/>
            <person name="Sanderson K.E."/>
            <person name="Spieth J."/>
            <person name="Clifton S.W."/>
            <person name="Latreille P."/>
            <person name="Courtney L."/>
            <person name="Porwollik S."/>
            <person name="Ali J."/>
            <person name="Dante M."/>
            <person name="Du F."/>
            <person name="Hou S."/>
            <person name="Layman D."/>
            <person name="Leonard S."/>
            <person name="Nguyen C."/>
            <person name="Scott K."/>
            <person name="Holmes A."/>
            <person name="Grewal N."/>
            <person name="Mulvaney E."/>
            <person name="Ryan E."/>
            <person name="Sun H."/>
            <person name="Florea L."/>
            <person name="Miller W."/>
            <person name="Stoneking T."/>
            <person name="Nhan M."/>
            <person name="Waterston R."/>
            <person name="Wilson R.K."/>
        </authorList>
    </citation>
    <scope>NUCLEOTIDE SEQUENCE [LARGE SCALE GENOMIC DNA]</scope>
    <source>
        <strain>LT2 / SGSC1412 / ATCC 700720</strain>
    </source>
</reference>
<evidence type="ECO:0000255" key="1">
    <source>
        <dbReference type="HAMAP-Rule" id="MF_01356"/>
    </source>
</evidence>
<gene>
    <name evidence="1" type="primary">nuoB</name>
    <name type="ordered locus">STM2327</name>
</gene>
<organism>
    <name type="scientific">Salmonella typhimurium (strain LT2 / SGSC1412 / ATCC 700720)</name>
    <dbReference type="NCBI Taxonomy" id="99287"/>
    <lineage>
        <taxon>Bacteria</taxon>
        <taxon>Pseudomonadati</taxon>
        <taxon>Pseudomonadota</taxon>
        <taxon>Gammaproteobacteria</taxon>
        <taxon>Enterobacterales</taxon>
        <taxon>Enterobacteriaceae</taxon>
        <taxon>Salmonella</taxon>
    </lineage>
</organism>
<protein>
    <recommendedName>
        <fullName evidence="1">NADH-quinone oxidoreductase subunit B</fullName>
        <ecNumber evidence="1">7.1.1.-</ecNumber>
    </recommendedName>
    <alternativeName>
        <fullName evidence="1">NADH dehydrogenase I subunit B</fullName>
    </alternativeName>
    <alternativeName>
        <fullName evidence="1">NDH-1 subunit B</fullName>
    </alternativeName>
</protein>
<keyword id="KW-0004">4Fe-4S</keyword>
<keyword id="KW-0997">Cell inner membrane</keyword>
<keyword id="KW-1003">Cell membrane</keyword>
<keyword id="KW-0408">Iron</keyword>
<keyword id="KW-0411">Iron-sulfur</keyword>
<keyword id="KW-0472">Membrane</keyword>
<keyword id="KW-0479">Metal-binding</keyword>
<keyword id="KW-0520">NAD</keyword>
<keyword id="KW-0874">Quinone</keyword>
<keyword id="KW-1185">Reference proteome</keyword>
<keyword id="KW-1278">Translocase</keyword>
<keyword id="KW-0813">Transport</keyword>
<keyword id="KW-0830">Ubiquinone</keyword>
<comment type="function">
    <text evidence="1">NDH-1 shuttles electrons from NADH, via FMN and iron-sulfur (Fe-S) centers, to quinones in the respiratory chain. The immediate electron acceptor for the enzyme in this species is believed to be ubiquinone. Couples the redox reaction to proton translocation (for every two electrons transferred, four hydrogen ions are translocated across the cytoplasmic membrane), and thus conserves the redox energy in a proton gradient.</text>
</comment>
<comment type="catalytic activity">
    <reaction evidence="1">
        <text>a quinone + NADH + 5 H(+)(in) = a quinol + NAD(+) + 4 H(+)(out)</text>
        <dbReference type="Rhea" id="RHEA:57888"/>
        <dbReference type="ChEBI" id="CHEBI:15378"/>
        <dbReference type="ChEBI" id="CHEBI:24646"/>
        <dbReference type="ChEBI" id="CHEBI:57540"/>
        <dbReference type="ChEBI" id="CHEBI:57945"/>
        <dbReference type="ChEBI" id="CHEBI:132124"/>
    </reaction>
</comment>
<comment type="cofactor">
    <cofactor evidence="1">
        <name>[4Fe-4S] cluster</name>
        <dbReference type="ChEBI" id="CHEBI:49883"/>
    </cofactor>
    <text evidence="1">Binds 1 [4Fe-4S] cluster.</text>
</comment>
<comment type="subunit">
    <text evidence="1">NDH-1 is composed of 13 different subunits. Subunits NuoB, CD, E, F, and G constitute the peripheral sector of the complex.</text>
</comment>
<comment type="subcellular location">
    <subcellularLocation>
        <location evidence="1">Cell inner membrane</location>
        <topology evidence="1">Peripheral membrane protein</topology>
        <orientation evidence="1">Cytoplasmic side</orientation>
    </subcellularLocation>
</comment>
<comment type="similarity">
    <text evidence="1">Belongs to the complex I 20 kDa subunit family.</text>
</comment>
<sequence length="220" mass="25089">MDYTLTRIDPNGENDRYPLQKQEIVTDPLEQEVNKNVFMGKLHDMVNWGRKNSIWPYNFGLSCCYVEMVTSFTAVHDVARFGAEVLRASPRQADLMVVAGTCFTKMAPVIQRLYDQMLEPKWVISMGACANSGGMYDIYSVVQGVDKFIPVDVYIPGCPPRPEAYMQALMLLQESIGKERRPLSWVVGDQGVYRANMQPERERKRGERIAVTNLRTPDEI</sequence>
<name>NUOB_SALTY</name>
<feature type="chain" id="PRO_0000376372" description="NADH-quinone oxidoreductase subunit B">
    <location>
        <begin position="1"/>
        <end position="220"/>
    </location>
</feature>
<feature type="binding site" evidence="1">
    <location>
        <position position="63"/>
    </location>
    <ligand>
        <name>[4Fe-4S] cluster</name>
        <dbReference type="ChEBI" id="CHEBI:49883"/>
    </ligand>
</feature>
<feature type="binding site" evidence="1">
    <location>
        <position position="64"/>
    </location>
    <ligand>
        <name>[4Fe-4S] cluster</name>
        <dbReference type="ChEBI" id="CHEBI:49883"/>
    </ligand>
</feature>
<feature type="binding site" evidence="1">
    <location>
        <position position="129"/>
    </location>
    <ligand>
        <name>[4Fe-4S] cluster</name>
        <dbReference type="ChEBI" id="CHEBI:49883"/>
    </ligand>
</feature>
<feature type="binding site" evidence="1">
    <location>
        <position position="158"/>
    </location>
    <ligand>
        <name>[4Fe-4S] cluster</name>
        <dbReference type="ChEBI" id="CHEBI:49883"/>
    </ligand>
</feature>